<name>KHSE_RHOPB</name>
<accession>Q20Z33</accession>
<protein>
    <recommendedName>
        <fullName evidence="1">Homoserine kinase</fullName>
        <shortName evidence="1">HK</shortName>
        <shortName evidence="1">HSK</shortName>
        <ecNumber evidence="1">2.7.1.39</ecNumber>
    </recommendedName>
</protein>
<keyword id="KW-0028">Amino-acid biosynthesis</keyword>
<keyword id="KW-0067">ATP-binding</keyword>
<keyword id="KW-0418">Kinase</keyword>
<keyword id="KW-0547">Nucleotide-binding</keyword>
<keyword id="KW-0791">Threonine biosynthesis</keyword>
<keyword id="KW-0808">Transferase</keyword>
<sequence length="326" mass="35761">MAVYTDVAAEELAEFLRGYDIGELLSYKGIAEGVENSNYLLHTSKGSFILTLYEKRVASEDLPYFLTLMSHLAERGIRCPQPEKNRGGAVFGTLMGRPAAIINFLEGVWPRRPNVAQCAAVGEGLARLHLAGQDFPLRRANPLSVGGWRALFEQSAAGADPLQHGLHALLHAELDYLEHAWPKQLPDGVIHADLFPDNAFFLGDTLSGIIDFPFACNDILAYDVAICLNAWCFEPDHSFNVTKARAFLGGYGRERPLTTSEEDALPLLARGAALRFLLTRLVDSLNVPAGALVRPKDPLEYARKLRFHQSVDSIRDYGVTASGVVA</sequence>
<reference key="1">
    <citation type="submission" date="2006-03" db="EMBL/GenBank/DDBJ databases">
        <title>Complete sequence of Rhodopseudomonas palustris BisB18.</title>
        <authorList>
            <consortium name="US DOE Joint Genome Institute"/>
            <person name="Copeland A."/>
            <person name="Lucas S."/>
            <person name="Lapidus A."/>
            <person name="Barry K."/>
            <person name="Detter J.C."/>
            <person name="Glavina del Rio T."/>
            <person name="Hammon N."/>
            <person name="Israni S."/>
            <person name="Dalin E."/>
            <person name="Tice H."/>
            <person name="Pitluck S."/>
            <person name="Chain P."/>
            <person name="Malfatti S."/>
            <person name="Shin M."/>
            <person name="Vergez L."/>
            <person name="Schmutz J."/>
            <person name="Larimer F."/>
            <person name="Land M."/>
            <person name="Hauser L."/>
            <person name="Pelletier D.A."/>
            <person name="Kyrpides N."/>
            <person name="Anderson I."/>
            <person name="Oda Y."/>
            <person name="Harwood C.S."/>
            <person name="Richardson P."/>
        </authorList>
    </citation>
    <scope>NUCLEOTIDE SEQUENCE [LARGE SCALE GENOMIC DNA]</scope>
    <source>
        <strain>BisB18</strain>
    </source>
</reference>
<comment type="catalytic activity">
    <reaction evidence="1">
        <text>L-homoserine + ATP = O-phospho-L-homoserine + ADP + H(+)</text>
        <dbReference type="Rhea" id="RHEA:13985"/>
        <dbReference type="ChEBI" id="CHEBI:15378"/>
        <dbReference type="ChEBI" id="CHEBI:30616"/>
        <dbReference type="ChEBI" id="CHEBI:57476"/>
        <dbReference type="ChEBI" id="CHEBI:57590"/>
        <dbReference type="ChEBI" id="CHEBI:456216"/>
        <dbReference type="EC" id="2.7.1.39"/>
    </reaction>
</comment>
<comment type="pathway">
    <text evidence="1">Amino-acid biosynthesis; L-threonine biosynthesis; L-threonine from L-aspartate: step 4/5.</text>
</comment>
<comment type="similarity">
    <text evidence="1">Belongs to the pseudomonas-type ThrB family.</text>
</comment>
<dbReference type="EC" id="2.7.1.39" evidence="1"/>
<dbReference type="EMBL" id="CP000301">
    <property type="protein sequence ID" value="ABD89603.1"/>
    <property type="molecule type" value="Genomic_DNA"/>
</dbReference>
<dbReference type="SMR" id="Q20Z33"/>
<dbReference type="STRING" id="316056.RPC_4077"/>
<dbReference type="KEGG" id="rpc:RPC_4077"/>
<dbReference type="eggNOG" id="COG2334">
    <property type="taxonomic scope" value="Bacteria"/>
</dbReference>
<dbReference type="HOGENOM" id="CLU_053300_1_0_5"/>
<dbReference type="OrthoDB" id="9777460at2"/>
<dbReference type="UniPathway" id="UPA00050">
    <property type="reaction ID" value="UER00064"/>
</dbReference>
<dbReference type="GO" id="GO:0005524">
    <property type="term" value="F:ATP binding"/>
    <property type="evidence" value="ECO:0007669"/>
    <property type="project" value="UniProtKB-KW"/>
</dbReference>
<dbReference type="GO" id="GO:0004413">
    <property type="term" value="F:homoserine kinase activity"/>
    <property type="evidence" value="ECO:0007669"/>
    <property type="project" value="UniProtKB-UniRule"/>
</dbReference>
<dbReference type="GO" id="GO:0009088">
    <property type="term" value="P:threonine biosynthetic process"/>
    <property type="evidence" value="ECO:0007669"/>
    <property type="project" value="UniProtKB-UniRule"/>
</dbReference>
<dbReference type="CDD" id="cd05153">
    <property type="entry name" value="HomoserineK_II"/>
    <property type="match status" value="1"/>
</dbReference>
<dbReference type="Gene3D" id="3.90.1200.10">
    <property type="match status" value="1"/>
</dbReference>
<dbReference type="Gene3D" id="3.30.200.20">
    <property type="entry name" value="Phosphorylase Kinase, domain 1"/>
    <property type="match status" value="1"/>
</dbReference>
<dbReference type="HAMAP" id="MF_00301">
    <property type="entry name" value="Homoser_kinase_2"/>
    <property type="match status" value="1"/>
</dbReference>
<dbReference type="InterPro" id="IPR002575">
    <property type="entry name" value="Aminoglycoside_PTrfase"/>
</dbReference>
<dbReference type="InterPro" id="IPR005280">
    <property type="entry name" value="Homoserine_kinase_II"/>
</dbReference>
<dbReference type="InterPro" id="IPR011009">
    <property type="entry name" value="Kinase-like_dom_sf"/>
</dbReference>
<dbReference type="InterPro" id="IPR050249">
    <property type="entry name" value="Pseudomonas-type_ThrB"/>
</dbReference>
<dbReference type="NCBIfam" id="NF003558">
    <property type="entry name" value="PRK05231.1"/>
    <property type="match status" value="1"/>
</dbReference>
<dbReference type="NCBIfam" id="TIGR00938">
    <property type="entry name" value="thrB_alt"/>
    <property type="match status" value="1"/>
</dbReference>
<dbReference type="PANTHER" id="PTHR21064:SF6">
    <property type="entry name" value="AMINOGLYCOSIDE PHOSPHOTRANSFERASE DOMAIN-CONTAINING PROTEIN"/>
    <property type="match status" value="1"/>
</dbReference>
<dbReference type="PANTHER" id="PTHR21064">
    <property type="entry name" value="AMINOGLYCOSIDE PHOSPHOTRANSFERASE DOMAIN-CONTAINING PROTEIN-RELATED"/>
    <property type="match status" value="1"/>
</dbReference>
<dbReference type="Pfam" id="PF01636">
    <property type="entry name" value="APH"/>
    <property type="match status" value="1"/>
</dbReference>
<dbReference type="SUPFAM" id="SSF56112">
    <property type="entry name" value="Protein kinase-like (PK-like)"/>
    <property type="match status" value="1"/>
</dbReference>
<organism>
    <name type="scientific">Rhodopseudomonas palustris (strain BisB18)</name>
    <dbReference type="NCBI Taxonomy" id="316056"/>
    <lineage>
        <taxon>Bacteria</taxon>
        <taxon>Pseudomonadati</taxon>
        <taxon>Pseudomonadota</taxon>
        <taxon>Alphaproteobacteria</taxon>
        <taxon>Hyphomicrobiales</taxon>
        <taxon>Nitrobacteraceae</taxon>
        <taxon>Rhodopseudomonas</taxon>
    </lineage>
</organism>
<feature type="chain" id="PRO_0000300804" description="Homoserine kinase">
    <location>
        <begin position="1"/>
        <end position="326"/>
    </location>
</feature>
<proteinExistence type="inferred from homology"/>
<gene>
    <name evidence="1" type="primary">thrB</name>
    <name type="ordered locus">RPC_4077</name>
</gene>
<evidence type="ECO:0000255" key="1">
    <source>
        <dbReference type="HAMAP-Rule" id="MF_00301"/>
    </source>
</evidence>